<protein>
    <recommendedName>
        <fullName evidence="1">RNA-binding protein Hfq</fullName>
    </recommendedName>
</protein>
<accession>Q328F1</accession>
<proteinExistence type="inferred from homology"/>
<dbReference type="EMBL" id="CP000034">
    <property type="protein sequence ID" value="ABB64304.1"/>
    <property type="molecule type" value="Genomic_DNA"/>
</dbReference>
<dbReference type="RefSeq" id="WP_001051884.1">
    <property type="nucleotide sequence ID" value="NC_007606.1"/>
</dbReference>
<dbReference type="RefSeq" id="YP_405795.1">
    <property type="nucleotide sequence ID" value="NC_007606.1"/>
</dbReference>
<dbReference type="SMR" id="Q328F1"/>
<dbReference type="STRING" id="300267.SDY_4417"/>
<dbReference type="EnsemblBacteria" id="ABB64304">
    <property type="protein sequence ID" value="ABB64304"/>
    <property type="gene ID" value="SDY_4417"/>
</dbReference>
<dbReference type="KEGG" id="sdy:SDY_4417"/>
<dbReference type="PATRIC" id="fig|300267.13.peg.5215"/>
<dbReference type="HOGENOM" id="CLU_113688_2_1_6"/>
<dbReference type="Proteomes" id="UP000002716">
    <property type="component" value="Chromosome"/>
</dbReference>
<dbReference type="GO" id="GO:0005829">
    <property type="term" value="C:cytosol"/>
    <property type="evidence" value="ECO:0007669"/>
    <property type="project" value="TreeGrafter"/>
</dbReference>
<dbReference type="GO" id="GO:0003723">
    <property type="term" value="F:RNA binding"/>
    <property type="evidence" value="ECO:0007669"/>
    <property type="project" value="UniProtKB-UniRule"/>
</dbReference>
<dbReference type="GO" id="GO:0006355">
    <property type="term" value="P:regulation of DNA-templated transcription"/>
    <property type="evidence" value="ECO:0007669"/>
    <property type="project" value="InterPro"/>
</dbReference>
<dbReference type="GO" id="GO:0043487">
    <property type="term" value="P:regulation of RNA stability"/>
    <property type="evidence" value="ECO:0007669"/>
    <property type="project" value="TreeGrafter"/>
</dbReference>
<dbReference type="GO" id="GO:0045974">
    <property type="term" value="P:regulation of translation, ncRNA-mediated"/>
    <property type="evidence" value="ECO:0007669"/>
    <property type="project" value="TreeGrafter"/>
</dbReference>
<dbReference type="CDD" id="cd01716">
    <property type="entry name" value="Hfq"/>
    <property type="match status" value="1"/>
</dbReference>
<dbReference type="FunFam" id="2.30.30.100:FF:000001">
    <property type="entry name" value="RNA-binding protein Hfq"/>
    <property type="match status" value="1"/>
</dbReference>
<dbReference type="Gene3D" id="2.30.30.100">
    <property type="match status" value="1"/>
</dbReference>
<dbReference type="HAMAP" id="MF_00436">
    <property type="entry name" value="Hfq"/>
    <property type="match status" value="1"/>
</dbReference>
<dbReference type="InterPro" id="IPR005001">
    <property type="entry name" value="Hfq"/>
</dbReference>
<dbReference type="InterPro" id="IPR010920">
    <property type="entry name" value="LSM_dom_sf"/>
</dbReference>
<dbReference type="InterPro" id="IPR047575">
    <property type="entry name" value="Sm"/>
</dbReference>
<dbReference type="NCBIfam" id="TIGR02383">
    <property type="entry name" value="Hfq"/>
    <property type="match status" value="1"/>
</dbReference>
<dbReference type="NCBIfam" id="NF001602">
    <property type="entry name" value="PRK00395.1"/>
    <property type="match status" value="1"/>
</dbReference>
<dbReference type="PANTHER" id="PTHR34772">
    <property type="entry name" value="RNA-BINDING PROTEIN HFQ"/>
    <property type="match status" value="1"/>
</dbReference>
<dbReference type="PANTHER" id="PTHR34772:SF1">
    <property type="entry name" value="RNA-BINDING PROTEIN HFQ"/>
    <property type="match status" value="1"/>
</dbReference>
<dbReference type="Pfam" id="PF17209">
    <property type="entry name" value="Hfq"/>
    <property type="match status" value="1"/>
</dbReference>
<dbReference type="SUPFAM" id="SSF50182">
    <property type="entry name" value="Sm-like ribonucleoproteins"/>
    <property type="match status" value="1"/>
</dbReference>
<dbReference type="PROSITE" id="PS52002">
    <property type="entry name" value="SM"/>
    <property type="match status" value="1"/>
</dbReference>
<sequence>MAKGQSLQDPFLNALRRERVPVSIYLVNGIKLQGQIESFDQFVILLKNTVSQMVYKHAISTVVPSRPVSHHSNNAGGGTSSNYHHGSSPQNTSAQQDSEETE</sequence>
<name>HFQ_SHIDS</name>
<reference key="1">
    <citation type="journal article" date="2005" name="Nucleic Acids Res.">
        <title>Genome dynamics and diversity of Shigella species, the etiologic agents of bacillary dysentery.</title>
        <authorList>
            <person name="Yang F."/>
            <person name="Yang J."/>
            <person name="Zhang X."/>
            <person name="Chen L."/>
            <person name="Jiang Y."/>
            <person name="Yan Y."/>
            <person name="Tang X."/>
            <person name="Wang J."/>
            <person name="Xiong Z."/>
            <person name="Dong J."/>
            <person name="Xue Y."/>
            <person name="Zhu Y."/>
            <person name="Xu X."/>
            <person name="Sun L."/>
            <person name="Chen S."/>
            <person name="Nie H."/>
            <person name="Peng J."/>
            <person name="Xu J."/>
            <person name="Wang Y."/>
            <person name="Yuan Z."/>
            <person name="Wen Y."/>
            <person name="Yao Z."/>
            <person name="Shen Y."/>
            <person name="Qiang B."/>
            <person name="Hou Y."/>
            <person name="Yu J."/>
            <person name="Jin Q."/>
        </authorList>
    </citation>
    <scope>NUCLEOTIDE SEQUENCE [LARGE SCALE GENOMIC DNA]</scope>
    <source>
        <strain>Sd197</strain>
    </source>
</reference>
<feature type="chain" id="PRO_0000265192" description="RNA-binding protein Hfq">
    <location>
        <begin position="1"/>
        <end position="102"/>
    </location>
</feature>
<feature type="domain" description="Sm" evidence="2">
    <location>
        <begin position="9"/>
        <end position="68"/>
    </location>
</feature>
<feature type="region of interest" description="Disordered" evidence="3">
    <location>
        <begin position="63"/>
        <end position="102"/>
    </location>
</feature>
<feature type="compositionally biased region" description="Polar residues" evidence="3">
    <location>
        <begin position="70"/>
        <end position="96"/>
    </location>
</feature>
<evidence type="ECO:0000255" key="1">
    <source>
        <dbReference type="HAMAP-Rule" id="MF_00436"/>
    </source>
</evidence>
<evidence type="ECO:0000255" key="2">
    <source>
        <dbReference type="PROSITE-ProRule" id="PRU01346"/>
    </source>
</evidence>
<evidence type="ECO:0000256" key="3">
    <source>
        <dbReference type="SAM" id="MobiDB-lite"/>
    </source>
</evidence>
<gene>
    <name evidence="1" type="primary">hfq</name>
    <name type="ordered locus">SDY_4417</name>
</gene>
<organism>
    <name type="scientific">Shigella dysenteriae serotype 1 (strain Sd197)</name>
    <dbReference type="NCBI Taxonomy" id="300267"/>
    <lineage>
        <taxon>Bacteria</taxon>
        <taxon>Pseudomonadati</taxon>
        <taxon>Pseudomonadota</taxon>
        <taxon>Gammaproteobacteria</taxon>
        <taxon>Enterobacterales</taxon>
        <taxon>Enterobacteriaceae</taxon>
        <taxon>Shigella</taxon>
    </lineage>
</organism>
<comment type="function">
    <text evidence="1">RNA chaperone that binds small regulatory RNA (sRNAs) and mRNAs to facilitate mRNA translational regulation in response to envelope stress, environmental stress and changes in metabolite concentrations. Also binds with high specificity to tRNAs.</text>
</comment>
<comment type="subunit">
    <text evidence="1">Homohexamer.</text>
</comment>
<comment type="similarity">
    <text evidence="1">Belongs to the Hfq family.</text>
</comment>
<keyword id="KW-1185">Reference proteome</keyword>
<keyword id="KW-0694">RNA-binding</keyword>
<keyword id="KW-0346">Stress response</keyword>